<feature type="chain" id="PRO_1000051709" description="Nucleotide-binding protein Aave_1854">
    <location>
        <begin position="1"/>
        <end position="161"/>
    </location>
</feature>
<comment type="function">
    <text evidence="1">Nucleotide-binding protein.</text>
</comment>
<comment type="similarity">
    <text evidence="1">Belongs to the YajQ family.</text>
</comment>
<keyword id="KW-0547">Nucleotide-binding</keyword>
<accession>A1TNA0</accession>
<sequence>MPSFDTVCEANLVEVKNAVENSAKEIGTRFDFKGTSAAIEIKDKEITLFGDAEFQLQQVEDILRNKLTKRNVDVRFLDKGDVQKIGGDKVKQVIKVRNGIESELAKKIQKLVKESKIKVQAAIQEEKVRVTGAKRDDLQAVMALIRKDITDVPLSFDNFRD</sequence>
<evidence type="ECO:0000255" key="1">
    <source>
        <dbReference type="HAMAP-Rule" id="MF_00632"/>
    </source>
</evidence>
<dbReference type="EMBL" id="CP000512">
    <property type="protein sequence ID" value="ABM32438.1"/>
    <property type="molecule type" value="Genomic_DNA"/>
</dbReference>
<dbReference type="RefSeq" id="WP_011794984.1">
    <property type="nucleotide sequence ID" value="NC_008752.1"/>
</dbReference>
<dbReference type="SMR" id="A1TNA0"/>
<dbReference type="STRING" id="397945.Aave_1854"/>
<dbReference type="KEGG" id="aav:Aave_1854"/>
<dbReference type="eggNOG" id="COG1666">
    <property type="taxonomic scope" value="Bacteria"/>
</dbReference>
<dbReference type="HOGENOM" id="CLU_099839_1_0_4"/>
<dbReference type="OrthoDB" id="9801447at2"/>
<dbReference type="Proteomes" id="UP000002596">
    <property type="component" value="Chromosome"/>
</dbReference>
<dbReference type="GO" id="GO:0005829">
    <property type="term" value="C:cytosol"/>
    <property type="evidence" value="ECO:0007669"/>
    <property type="project" value="TreeGrafter"/>
</dbReference>
<dbReference type="GO" id="GO:0000166">
    <property type="term" value="F:nucleotide binding"/>
    <property type="evidence" value="ECO:0007669"/>
    <property type="project" value="TreeGrafter"/>
</dbReference>
<dbReference type="CDD" id="cd11740">
    <property type="entry name" value="YajQ_like"/>
    <property type="match status" value="1"/>
</dbReference>
<dbReference type="Gene3D" id="3.30.70.860">
    <property type="match status" value="1"/>
</dbReference>
<dbReference type="Gene3D" id="3.30.70.990">
    <property type="entry name" value="YajQ-like, domain 2"/>
    <property type="match status" value="1"/>
</dbReference>
<dbReference type="HAMAP" id="MF_00632">
    <property type="entry name" value="YajQ"/>
    <property type="match status" value="1"/>
</dbReference>
<dbReference type="InterPro" id="IPR007551">
    <property type="entry name" value="DUF520"/>
</dbReference>
<dbReference type="InterPro" id="IPR035571">
    <property type="entry name" value="UPF0234-like_C"/>
</dbReference>
<dbReference type="InterPro" id="IPR035570">
    <property type="entry name" value="UPF0234_N"/>
</dbReference>
<dbReference type="InterPro" id="IPR036183">
    <property type="entry name" value="YajQ-like_sf"/>
</dbReference>
<dbReference type="NCBIfam" id="NF003819">
    <property type="entry name" value="PRK05412.1"/>
    <property type="match status" value="1"/>
</dbReference>
<dbReference type="PANTHER" id="PTHR30476">
    <property type="entry name" value="UPF0234 PROTEIN YAJQ"/>
    <property type="match status" value="1"/>
</dbReference>
<dbReference type="PANTHER" id="PTHR30476:SF0">
    <property type="entry name" value="UPF0234 PROTEIN YAJQ"/>
    <property type="match status" value="1"/>
</dbReference>
<dbReference type="Pfam" id="PF04461">
    <property type="entry name" value="DUF520"/>
    <property type="match status" value="1"/>
</dbReference>
<dbReference type="SUPFAM" id="SSF89963">
    <property type="entry name" value="YajQ-like"/>
    <property type="match status" value="2"/>
</dbReference>
<proteinExistence type="inferred from homology"/>
<name>Y1854_PARC0</name>
<protein>
    <recommendedName>
        <fullName evidence="1">Nucleotide-binding protein Aave_1854</fullName>
    </recommendedName>
</protein>
<organism>
    <name type="scientific">Paracidovorax citrulli (strain AAC00-1)</name>
    <name type="common">Acidovorax citrulli</name>
    <dbReference type="NCBI Taxonomy" id="397945"/>
    <lineage>
        <taxon>Bacteria</taxon>
        <taxon>Pseudomonadati</taxon>
        <taxon>Pseudomonadota</taxon>
        <taxon>Betaproteobacteria</taxon>
        <taxon>Burkholderiales</taxon>
        <taxon>Comamonadaceae</taxon>
        <taxon>Paracidovorax</taxon>
    </lineage>
</organism>
<reference key="1">
    <citation type="submission" date="2006-12" db="EMBL/GenBank/DDBJ databases">
        <title>Complete sequence of Acidovorax avenae subsp. citrulli AAC00-1.</title>
        <authorList>
            <person name="Copeland A."/>
            <person name="Lucas S."/>
            <person name="Lapidus A."/>
            <person name="Barry K."/>
            <person name="Detter J.C."/>
            <person name="Glavina del Rio T."/>
            <person name="Dalin E."/>
            <person name="Tice H."/>
            <person name="Pitluck S."/>
            <person name="Kiss H."/>
            <person name="Brettin T."/>
            <person name="Bruce D."/>
            <person name="Han C."/>
            <person name="Tapia R."/>
            <person name="Gilna P."/>
            <person name="Schmutz J."/>
            <person name="Larimer F."/>
            <person name="Land M."/>
            <person name="Hauser L."/>
            <person name="Kyrpides N."/>
            <person name="Kim E."/>
            <person name="Stahl D."/>
            <person name="Richardson P."/>
        </authorList>
    </citation>
    <scope>NUCLEOTIDE SEQUENCE [LARGE SCALE GENOMIC DNA]</scope>
    <source>
        <strain>AAC00-1</strain>
    </source>
</reference>
<gene>
    <name type="ordered locus">Aave_1854</name>
</gene>